<evidence type="ECO:0000255" key="1">
    <source>
        <dbReference type="HAMAP-Rule" id="MF_00144"/>
    </source>
</evidence>
<name>MNMA1_GEOKA</name>
<protein>
    <recommendedName>
        <fullName evidence="1">tRNA-specific 2-thiouridylase MnmA 1</fullName>
        <ecNumber evidence="1">2.8.1.13</ecNumber>
    </recommendedName>
</protein>
<proteinExistence type="inferred from homology"/>
<sequence length="370" mass="41281">MKKKRVVVGMSGGVDSSVAAYLLKQEGYDVIGVFMKNWDDTNDDGVCTATEDYEDVKRVANQLGIPYYSVNFEKEYWDRVFTYFIDELKRGRTPNPDVLCNTEIKFKAFVDYALSLDADYIATGHYARINRENGQIALLRGKDPNKDQTYFLSQLTAEHLSKVLFPIGELTKDEVRKIAQELNLVNANKKDSTGICFIGERNFKNFLKNYLPAQPGEIRSLDGEVLGTHDGLMYYTIGQRKGLGIGGKGTGEPWYVVDKDLENNVLLVAQGKNHPALFSTGLIASNISFINGDVRPRTFACTAKFRYRQEDQKVTVHIRPNGTAFVEFEKPVKAVTPGQVAVFYDNDVCLGSAIIDEVIKMDASTATAAS</sequence>
<comment type="function">
    <text evidence="1">Catalyzes the 2-thiolation of uridine at the wobble position (U34) of tRNA, leading to the formation of s(2)U34.</text>
</comment>
<comment type="catalytic activity">
    <reaction evidence="1">
        <text>S-sulfanyl-L-cysteinyl-[protein] + uridine(34) in tRNA + AH2 + ATP = 2-thiouridine(34) in tRNA + L-cysteinyl-[protein] + A + AMP + diphosphate + H(+)</text>
        <dbReference type="Rhea" id="RHEA:47032"/>
        <dbReference type="Rhea" id="RHEA-COMP:10131"/>
        <dbReference type="Rhea" id="RHEA-COMP:11726"/>
        <dbReference type="Rhea" id="RHEA-COMP:11727"/>
        <dbReference type="Rhea" id="RHEA-COMP:11728"/>
        <dbReference type="ChEBI" id="CHEBI:13193"/>
        <dbReference type="ChEBI" id="CHEBI:15378"/>
        <dbReference type="ChEBI" id="CHEBI:17499"/>
        <dbReference type="ChEBI" id="CHEBI:29950"/>
        <dbReference type="ChEBI" id="CHEBI:30616"/>
        <dbReference type="ChEBI" id="CHEBI:33019"/>
        <dbReference type="ChEBI" id="CHEBI:61963"/>
        <dbReference type="ChEBI" id="CHEBI:65315"/>
        <dbReference type="ChEBI" id="CHEBI:87170"/>
        <dbReference type="ChEBI" id="CHEBI:456215"/>
        <dbReference type="EC" id="2.8.1.13"/>
    </reaction>
</comment>
<comment type="subcellular location">
    <subcellularLocation>
        <location evidence="1">Cytoplasm</location>
    </subcellularLocation>
</comment>
<comment type="similarity">
    <text evidence="1">Belongs to the MnmA/TRMU family.</text>
</comment>
<reference key="1">
    <citation type="journal article" date="2004" name="Nucleic Acids Res.">
        <title>Thermoadaptation trait revealed by the genome sequence of thermophilic Geobacillus kaustophilus.</title>
        <authorList>
            <person name="Takami H."/>
            <person name="Takaki Y."/>
            <person name="Chee G.-J."/>
            <person name="Nishi S."/>
            <person name="Shimamura S."/>
            <person name="Suzuki H."/>
            <person name="Matsui S."/>
            <person name="Uchiyama I."/>
        </authorList>
    </citation>
    <scope>NUCLEOTIDE SEQUENCE [LARGE SCALE GENOMIC DNA]</scope>
    <source>
        <strain>HTA426</strain>
    </source>
</reference>
<organism>
    <name type="scientific">Geobacillus kaustophilus (strain HTA426)</name>
    <dbReference type="NCBI Taxonomy" id="235909"/>
    <lineage>
        <taxon>Bacteria</taxon>
        <taxon>Bacillati</taxon>
        <taxon>Bacillota</taxon>
        <taxon>Bacilli</taxon>
        <taxon>Bacillales</taxon>
        <taxon>Anoxybacillaceae</taxon>
        <taxon>Geobacillus</taxon>
        <taxon>Geobacillus thermoleovorans group</taxon>
    </lineage>
</organism>
<dbReference type="EC" id="2.8.1.13" evidence="1"/>
<dbReference type="EMBL" id="BA000043">
    <property type="protein sequence ID" value="BAD75294.1"/>
    <property type="molecule type" value="Genomic_DNA"/>
</dbReference>
<dbReference type="SMR" id="Q5L186"/>
<dbReference type="STRING" id="235909.GK1009"/>
<dbReference type="KEGG" id="gka:GK1009"/>
<dbReference type="eggNOG" id="COG0482">
    <property type="taxonomic scope" value="Bacteria"/>
</dbReference>
<dbReference type="HOGENOM" id="CLU_035188_1_0_9"/>
<dbReference type="Proteomes" id="UP000001172">
    <property type="component" value="Chromosome"/>
</dbReference>
<dbReference type="GO" id="GO:0005737">
    <property type="term" value="C:cytoplasm"/>
    <property type="evidence" value="ECO:0007669"/>
    <property type="project" value="UniProtKB-SubCell"/>
</dbReference>
<dbReference type="GO" id="GO:0005524">
    <property type="term" value="F:ATP binding"/>
    <property type="evidence" value="ECO:0007669"/>
    <property type="project" value="UniProtKB-KW"/>
</dbReference>
<dbReference type="GO" id="GO:0000049">
    <property type="term" value="F:tRNA binding"/>
    <property type="evidence" value="ECO:0007669"/>
    <property type="project" value="UniProtKB-KW"/>
</dbReference>
<dbReference type="GO" id="GO:0103016">
    <property type="term" value="F:tRNA-uridine 2-sulfurtransferase activity"/>
    <property type="evidence" value="ECO:0007669"/>
    <property type="project" value="UniProtKB-EC"/>
</dbReference>
<dbReference type="GO" id="GO:0002143">
    <property type="term" value="P:tRNA wobble position uridine thiolation"/>
    <property type="evidence" value="ECO:0007669"/>
    <property type="project" value="TreeGrafter"/>
</dbReference>
<dbReference type="CDD" id="cd01998">
    <property type="entry name" value="MnmA_TRMU-like"/>
    <property type="match status" value="1"/>
</dbReference>
<dbReference type="FunFam" id="2.30.30.280:FF:000001">
    <property type="entry name" value="tRNA-specific 2-thiouridylase MnmA"/>
    <property type="match status" value="1"/>
</dbReference>
<dbReference type="FunFam" id="2.40.30.10:FF:000023">
    <property type="entry name" value="tRNA-specific 2-thiouridylase MnmA"/>
    <property type="match status" value="1"/>
</dbReference>
<dbReference type="FunFam" id="3.40.50.620:FF:000004">
    <property type="entry name" value="tRNA-specific 2-thiouridylase MnmA"/>
    <property type="match status" value="1"/>
</dbReference>
<dbReference type="Gene3D" id="2.30.30.280">
    <property type="entry name" value="Adenine nucleotide alpha hydrolases-like domains"/>
    <property type="match status" value="1"/>
</dbReference>
<dbReference type="Gene3D" id="3.40.50.620">
    <property type="entry name" value="HUPs"/>
    <property type="match status" value="1"/>
</dbReference>
<dbReference type="Gene3D" id="2.40.30.10">
    <property type="entry name" value="Translation factors"/>
    <property type="match status" value="1"/>
</dbReference>
<dbReference type="HAMAP" id="MF_00144">
    <property type="entry name" value="tRNA_thiouridyl_MnmA"/>
    <property type="match status" value="1"/>
</dbReference>
<dbReference type="InterPro" id="IPR004506">
    <property type="entry name" value="MnmA-like"/>
</dbReference>
<dbReference type="InterPro" id="IPR046885">
    <property type="entry name" value="MnmA-like_C"/>
</dbReference>
<dbReference type="InterPro" id="IPR046884">
    <property type="entry name" value="MnmA-like_central"/>
</dbReference>
<dbReference type="InterPro" id="IPR023382">
    <property type="entry name" value="MnmA-like_central_sf"/>
</dbReference>
<dbReference type="InterPro" id="IPR014729">
    <property type="entry name" value="Rossmann-like_a/b/a_fold"/>
</dbReference>
<dbReference type="NCBIfam" id="NF001138">
    <property type="entry name" value="PRK00143.1"/>
    <property type="match status" value="1"/>
</dbReference>
<dbReference type="NCBIfam" id="TIGR00420">
    <property type="entry name" value="trmU"/>
    <property type="match status" value="1"/>
</dbReference>
<dbReference type="PANTHER" id="PTHR11933:SF5">
    <property type="entry name" value="MITOCHONDRIAL TRNA-SPECIFIC 2-THIOURIDYLASE 1"/>
    <property type="match status" value="1"/>
</dbReference>
<dbReference type="PANTHER" id="PTHR11933">
    <property type="entry name" value="TRNA 5-METHYLAMINOMETHYL-2-THIOURIDYLATE -METHYLTRANSFERASE"/>
    <property type="match status" value="1"/>
</dbReference>
<dbReference type="Pfam" id="PF03054">
    <property type="entry name" value="tRNA_Me_trans"/>
    <property type="match status" value="1"/>
</dbReference>
<dbReference type="Pfam" id="PF20258">
    <property type="entry name" value="tRNA_Me_trans_C"/>
    <property type="match status" value="1"/>
</dbReference>
<dbReference type="Pfam" id="PF20259">
    <property type="entry name" value="tRNA_Me_trans_M"/>
    <property type="match status" value="1"/>
</dbReference>
<dbReference type="SUPFAM" id="SSF52402">
    <property type="entry name" value="Adenine nucleotide alpha hydrolases-like"/>
    <property type="match status" value="1"/>
</dbReference>
<keyword id="KW-0067">ATP-binding</keyword>
<keyword id="KW-0963">Cytoplasm</keyword>
<keyword id="KW-1015">Disulfide bond</keyword>
<keyword id="KW-0547">Nucleotide-binding</keyword>
<keyword id="KW-1185">Reference proteome</keyword>
<keyword id="KW-0694">RNA-binding</keyword>
<keyword id="KW-0808">Transferase</keyword>
<keyword id="KW-0819">tRNA processing</keyword>
<keyword id="KW-0820">tRNA-binding</keyword>
<gene>
    <name evidence="1" type="primary">mnmA1</name>
    <name type="ordered locus">GK1009</name>
</gene>
<feature type="chain" id="PRO_0000349645" description="tRNA-specific 2-thiouridylase MnmA 1">
    <location>
        <begin position="1"/>
        <end position="370"/>
    </location>
</feature>
<feature type="region of interest" description="Interaction with target base in tRNA" evidence="1">
    <location>
        <begin position="95"/>
        <end position="97"/>
    </location>
</feature>
<feature type="region of interest" description="Interaction with tRNA" evidence="1">
    <location>
        <begin position="146"/>
        <end position="148"/>
    </location>
</feature>
<feature type="region of interest" description="Interaction with tRNA" evidence="1">
    <location>
        <begin position="306"/>
        <end position="307"/>
    </location>
</feature>
<feature type="active site" description="Nucleophile" evidence="1">
    <location>
        <position position="100"/>
    </location>
</feature>
<feature type="active site" description="Cysteine persulfide intermediate" evidence="1">
    <location>
        <position position="196"/>
    </location>
</feature>
<feature type="binding site" evidence="1">
    <location>
        <begin position="9"/>
        <end position="16"/>
    </location>
    <ligand>
        <name>ATP</name>
        <dbReference type="ChEBI" id="CHEBI:30616"/>
    </ligand>
</feature>
<feature type="binding site" evidence="1">
    <location>
        <position position="35"/>
    </location>
    <ligand>
        <name>ATP</name>
        <dbReference type="ChEBI" id="CHEBI:30616"/>
    </ligand>
</feature>
<feature type="binding site" evidence="1">
    <location>
        <position position="124"/>
    </location>
    <ligand>
        <name>ATP</name>
        <dbReference type="ChEBI" id="CHEBI:30616"/>
    </ligand>
</feature>
<feature type="site" description="Interaction with tRNA" evidence="1">
    <location>
        <position position="125"/>
    </location>
</feature>
<feature type="site" description="Interaction with tRNA" evidence="1">
    <location>
        <position position="339"/>
    </location>
</feature>
<feature type="disulfide bond" description="Alternate" evidence="1">
    <location>
        <begin position="100"/>
        <end position="196"/>
    </location>
</feature>
<accession>Q5L186</accession>